<feature type="chain" id="PRO_1000185854" description="Probable L-tyrosine/L-aspartate decarboxylase">
    <location>
        <begin position="1"/>
        <end position="363"/>
    </location>
</feature>
<feature type="modified residue" description="N6-(pyridoxal phosphate)lysine" evidence="1">
    <location>
        <position position="224"/>
    </location>
</feature>
<gene>
    <name evidence="1" type="primary">mfnA</name>
    <name type="ordered locus">Mpal_2080</name>
</gene>
<protein>
    <recommendedName>
        <fullName evidence="1">Probable L-tyrosine/L-aspartate decarboxylase</fullName>
        <shortName evidence="1">TDC/ADC</shortName>
        <ecNumber evidence="1">4.1.1.11</ecNumber>
        <ecNumber evidence="1">4.1.1.25</ecNumber>
    </recommendedName>
</protein>
<organism>
    <name type="scientific">Methanosphaerula palustris (strain ATCC BAA-1556 / DSM 19958 / E1-9c)</name>
    <dbReference type="NCBI Taxonomy" id="521011"/>
    <lineage>
        <taxon>Archaea</taxon>
        <taxon>Methanobacteriati</taxon>
        <taxon>Methanobacteriota</taxon>
        <taxon>Stenosarchaea group</taxon>
        <taxon>Methanomicrobia</taxon>
        <taxon>Methanomicrobiales</taxon>
        <taxon>Methanoregulaceae</taxon>
        <taxon>Methanosphaerula</taxon>
    </lineage>
</organism>
<reference key="1">
    <citation type="journal article" date="2015" name="Genome Announc.">
        <title>Complete Genome Sequence of Methanosphaerula palustris E1-9CT, a Hydrogenotrophic Methanogen Isolated from a Minerotrophic Fen Peatland.</title>
        <authorList>
            <person name="Cadillo-Quiroz H."/>
            <person name="Browne P."/>
            <person name="Kyrpides N."/>
            <person name="Woyke T."/>
            <person name="Goodwin L."/>
            <person name="Detter C."/>
            <person name="Yavitt J.B."/>
            <person name="Zinder S.H."/>
        </authorList>
    </citation>
    <scope>NUCLEOTIDE SEQUENCE [LARGE SCALE GENOMIC DNA]</scope>
    <source>
        <strain>ATCC BAA-1556 / DSM 19958 / E1-9c</strain>
    </source>
</reference>
<sequence>MLNKGLAEEELFSFLSKKREEDLCHSHILSSMCTVPHPIAVKAHLMFMETNLGDPGLFPGTASLERLLIERLGDLFHHREAGGYATSGGTESNIQALRIAKAQKKVDKPNVVIPETSHFSFKKACDILGIQMKTVPADRSMRTDISEVSDAIDKNTIALVGIAGSTEYGMVDDIGALATIAEEEDLYLHVDAAFGGLVIPFLPNPPAFDFALPGVSSIAVDPHKMGMSTLPAGALLVREPQMLGLLNIDTPYLTVKQEYTLAGTRPGASVAGALAVLDYMGRDGMEAVVAGCMKNTSRLIRGMETLGFPRAVTPDVNVATFITNHPAPKNWVVSQTRRGHMRIICMPHVTADMIEQFLIDIGE</sequence>
<keyword id="KW-0210">Decarboxylase</keyword>
<keyword id="KW-0456">Lyase</keyword>
<keyword id="KW-0663">Pyridoxal phosphate</keyword>
<keyword id="KW-1185">Reference proteome</keyword>
<accession>B8GDM7</accession>
<proteinExistence type="inferred from homology"/>
<dbReference type="EC" id="4.1.1.11" evidence="1"/>
<dbReference type="EC" id="4.1.1.25" evidence="1"/>
<dbReference type="EMBL" id="CP001338">
    <property type="protein sequence ID" value="ACL17378.1"/>
    <property type="molecule type" value="Genomic_DNA"/>
</dbReference>
<dbReference type="RefSeq" id="WP_012618697.1">
    <property type="nucleotide sequence ID" value="NC_011832.1"/>
</dbReference>
<dbReference type="SMR" id="B8GDM7"/>
<dbReference type="STRING" id="521011.Mpal_2080"/>
<dbReference type="GeneID" id="7271557"/>
<dbReference type="KEGG" id="mpl:Mpal_2080"/>
<dbReference type="eggNOG" id="arCOG00027">
    <property type="taxonomic scope" value="Archaea"/>
</dbReference>
<dbReference type="HOGENOM" id="CLU_028929_2_1_2"/>
<dbReference type="OrthoDB" id="56891at2157"/>
<dbReference type="UniPathway" id="UPA00080"/>
<dbReference type="UniPathway" id="UPA00241"/>
<dbReference type="Proteomes" id="UP000002457">
    <property type="component" value="Chromosome"/>
</dbReference>
<dbReference type="GO" id="GO:0004068">
    <property type="term" value="F:aspartate 1-decarboxylase activity"/>
    <property type="evidence" value="ECO:0007669"/>
    <property type="project" value="UniProtKB-UniRule"/>
</dbReference>
<dbReference type="GO" id="GO:0030170">
    <property type="term" value="F:pyridoxal phosphate binding"/>
    <property type="evidence" value="ECO:0007669"/>
    <property type="project" value="UniProtKB-UniRule"/>
</dbReference>
<dbReference type="GO" id="GO:0004837">
    <property type="term" value="F:tyrosine decarboxylase activity"/>
    <property type="evidence" value="ECO:0007669"/>
    <property type="project" value="UniProtKB-UniRule"/>
</dbReference>
<dbReference type="GO" id="GO:0019752">
    <property type="term" value="P:carboxylic acid metabolic process"/>
    <property type="evidence" value="ECO:0007669"/>
    <property type="project" value="InterPro"/>
</dbReference>
<dbReference type="GO" id="GO:0015937">
    <property type="term" value="P:coenzyme A biosynthetic process"/>
    <property type="evidence" value="ECO:0007669"/>
    <property type="project" value="UniProtKB-UniRule"/>
</dbReference>
<dbReference type="GO" id="GO:2001120">
    <property type="term" value="P:methanofuran biosynthetic process"/>
    <property type="evidence" value="ECO:0007669"/>
    <property type="project" value="UniProtKB-UniRule"/>
</dbReference>
<dbReference type="Gene3D" id="3.90.1150.10">
    <property type="entry name" value="Aspartate Aminotransferase, domain 1"/>
    <property type="match status" value="1"/>
</dbReference>
<dbReference type="Gene3D" id="3.40.640.10">
    <property type="entry name" value="Type I PLP-dependent aspartate aminotransferase-like (Major domain)"/>
    <property type="match status" value="1"/>
</dbReference>
<dbReference type="HAMAP" id="MF_01610">
    <property type="entry name" value="MfnA_decarbox"/>
    <property type="match status" value="1"/>
</dbReference>
<dbReference type="InterPro" id="IPR050477">
    <property type="entry name" value="GrpII_AminoAcid_Decarb"/>
</dbReference>
<dbReference type="InterPro" id="IPR020931">
    <property type="entry name" value="MfnA"/>
</dbReference>
<dbReference type="InterPro" id="IPR002129">
    <property type="entry name" value="PyrdxlP-dep_de-COase"/>
</dbReference>
<dbReference type="InterPro" id="IPR015424">
    <property type="entry name" value="PyrdxlP-dep_Trfase"/>
</dbReference>
<dbReference type="InterPro" id="IPR015421">
    <property type="entry name" value="PyrdxlP-dep_Trfase_major"/>
</dbReference>
<dbReference type="InterPro" id="IPR015422">
    <property type="entry name" value="PyrdxlP-dep_Trfase_small"/>
</dbReference>
<dbReference type="InterPro" id="IPR021115">
    <property type="entry name" value="Pyridoxal-P_BS"/>
</dbReference>
<dbReference type="NCBIfam" id="TIGR03812">
    <property type="entry name" value="tyr_de_CO2_Arch"/>
    <property type="match status" value="1"/>
</dbReference>
<dbReference type="PANTHER" id="PTHR42735">
    <property type="match status" value="1"/>
</dbReference>
<dbReference type="PANTHER" id="PTHR42735:SF6">
    <property type="entry name" value="SPHINGOSINE-1-PHOSPHATE LYASE 1"/>
    <property type="match status" value="1"/>
</dbReference>
<dbReference type="Pfam" id="PF00282">
    <property type="entry name" value="Pyridoxal_deC"/>
    <property type="match status" value="1"/>
</dbReference>
<dbReference type="SUPFAM" id="SSF53383">
    <property type="entry name" value="PLP-dependent transferases"/>
    <property type="match status" value="1"/>
</dbReference>
<dbReference type="PROSITE" id="PS00392">
    <property type="entry name" value="DDC_GAD_HDC_YDC"/>
    <property type="match status" value="1"/>
</dbReference>
<evidence type="ECO:0000255" key="1">
    <source>
        <dbReference type="HAMAP-Rule" id="MF_01610"/>
    </source>
</evidence>
<comment type="function">
    <text evidence="1">Catalyzes the decarboxylation of L-tyrosine to produce tyramine for methanofuran biosynthesis. Can also catalyze the decarboxylation of L-aspartate to produce beta-alanine for coenzyme A (CoA) biosynthesis.</text>
</comment>
<comment type="catalytic activity">
    <reaction evidence="1">
        <text>L-tyrosine + H(+) = tyramine + CO2</text>
        <dbReference type="Rhea" id="RHEA:14345"/>
        <dbReference type="ChEBI" id="CHEBI:15378"/>
        <dbReference type="ChEBI" id="CHEBI:16526"/>
        <dbReference type="ChEBI" id="CHEBI:58315"/>
        <dbReference type="ChEBI" id="CHEBI:327995"/>
        <dbReference type="EC" id="4.1.1.25"/>
    </reaction>
</comment>
<comment type="catalytic activity">
    <reaction evidence="1">
        <text>L-aspartate + H(+) = beta-alanine + CO2</text>
        <dbReference type="Rhea" id="RHEA:19497"/>
        <dbReference type="ChEBI" id="CHEBI:15378"/>
        <dbReference type="ChEBI" id="CHEBI:16526"/>
        <dbReference type="ChEBI" id="CHEBI:29991"/>
        <dbReference type="ChEBI" id="CHEBI:57966"/>
        <dbReference type="EC" id="4.1.1.11"/>
    </reaction>
</comment>
<comment type="cofactor">
    <cofactor evidence="1">
        <name>pyridoxal 5'-phosphate</name>
        <dbReference type="ChEBI" id="CHEBI:597326"/>
    </cofactor>
</comment>
<comment type="pathway">
    <text evidence="1">Cofactor biosynthesis; methanofuran biosynthesis.</text>
</comment>
<comment type="pathway">
    <text evidence="1">Cofactor biosynthesis; coenzyme A biosynthesis.</text>
</comment>
<comment type="similarity">
    <text evidence="1">Belongs to the group II decarboxylase family. MfnA subfamily.</text>
</comment>
<name>MFNA_METPE</name>